<name>IDI_SALHS</name>
<keyword id="KW-0963">Cytoplasm</keyword>
<keyword id="KW-0413">Isomerase</keyword>
<keyword id="KW-0414">Isoprene biosynthesis</keyword>
<keyword id="KW-0460">Magnesium</keyword>
<keyword id="KW-0464">Manganese</keyword>
<keyword id="KW-0479">Metal-binding</keyword>
<evidence type="ECO:0000255" key="1">
    <source>
        <dbReference type="HAMAP-Rule" id="MF_00202"/>
    </source>
</evidence>
<comment type="function">
    <text evidence="1">Catalyzes the 1,3-allylic rearrangement of the homoallylic substrate isopentenyl (IPP) to its highly electrophilic allylic isomer, dimethylallyl diphosphate (DMAPP).</text>
</comment>
<comment type="catalytic activity">
    <reaction evidence="1">
        <text>isopentenyl diphosphate = dimethylallyl diphosphate</text>
        <dbReference type="Rhea" id="RHEA:23284"/>
        <dbReference type="ChEBI" id="CHEBI:57623"/>
        <dbReference type="ChEBI" id="CHEBI:128769"/>
        <dbReference type="EC" id="5.3.3.2"/>
    </reaction>
</comment>
<comment type="cofactor">
    <cofactor evidence="1">
        <name>Mg(2+)</name>
        <dbReference type="ChEBI" id="CHEBI:18420"/>
    </cofactor>
    <text evidence="1">Binds 1 Mg(2+) ion per subunit. The magnesium ion binds only when substrate is bound.</text>
</comment>
<comment type="cofactor">
    <cofactor evidence="1">
        <name>Mn(2+)</name>
        <dbReference type="ChEBI" id="CHEBI:29035"/>
    </cofactor>
    <text evidence="1">Binds 1 Mn(2+) ion per subunit.</text>
</comment>
<comment type="pathway">
    <text evidence="1">Isoprenoid biosynthesis; dimethylallyl diphosphate biosynthesis; dimethylallyl diphosphate from isopentenyl diphosphate: step 1/1.</text>
</comment>
<comment type="subunit">
    <text evidence="1">Homodimer.</text>
</comment>
<comment type="subcellular location">
    <subcellularLocation>
        <location evidence="1">Cytoplasm</location>
    </subcellularLocation>
</comment>
<comment type="similarity">
    <text evidence="1">Belongs to the IPP isomerase type 1 family.</text>
</comment>
<dbReference type="EC" id="5.3.3.2" evidence="1"/>
<dbReference type="EMBL" id="CP001120">
    <property type="protein sequence ID" value="ACF67957.1"/>
    <property type="molecule type" value="Genomic_DNA"/>
</dbReference>
<dbReference type="RefSeq" id="WP_000133994.1">
    <property type="nucleotide sequence ID" value="NC_011083.1"/>
</dbReference>
<dbReference type="SMR" id="B4TGV9"/>
<dbReference type="KEGG" id="seh:SeHA_C3270"/>
<dbReference type="HOGENOM" id="CLU_060552_2_0_6"/>
<dbReference type="UniPathway" id="UPA00059">
    <property type="reaction ID" value="UER00104"/>
</dbReference>
<dbReference type="Proteomes" id="UP000001866">
    <property type="component" value="Chromosome"/>
</dbReference>
<dbReference type="GO" id="GO:0005737">
    <property type="term" value="C:cytoplasm"/>
    <property type="evidence" value="ECO:0007669"/>
    <property type="project" value="UniProtKB-SubCell"/>
</dbReference>
<dbReference type="GO" id="GO:0004452">
    <property type="term" value="F:isopentenyl-diphosphate delta-isomerase activity"/>
    <property type="evidence" value="ECO:0007669"/>
    <property type="project" value="UniProtKB-UniRule"/>
</dbReference>
<dbReference type="GO" id="GO:0046872">
    <property type="term" value="F:metal ion binding"/>
    <property type="evidence" value="ECO:0007669"/>
    <property type="project" value="UniProtKB-KW"/>
</dbReference>
<dbReference type="GO" id="GO:0050992">
    <property type="term" value="P:dimethylallyl diphosphate biosynthetic process"/>
    <property type="evidence" value="ECO:0007669"/>
    <property type="project" value="UniProtKB-UniRule"/>
</dbReference>
<dbReference type="GO" id="GO:0008299">
    <property type="term" value="P:isoprenoid biosynthetic process"/>
    <property type="evidence" value="ECO:0007669"/>
    <property type="project" value="UniProtKB-KW"/>
</dbReference>
<dbReference type="CDD" id="cd02885">
    <property type="entry name" value="NUDIX_IPP_Isomerase"/>
    <property type="match status" value="1"/>
</dbReference>
<dbReference type="FunFam" id="3.90.79.10:FF:000009">
    <property type="entry name" value="Isopentenyl-diphosphate Delta-isomerase"/>
    <property type="match status" value="1"/>
</dbReference>
<dbReference type="Gene3D" id="3.90.79.10">
    <property type="entry name" value="Nucleoside Triphosphate Pyrophosphohydrolase"/>
    <property type="match status" value="1"/>
</dbReference>
<dbReference type="HAMAP" id="MF_00202">
    <property type="entry name" value="Idi"/>
    <property type="match status" value="1"/>
</dbReference>
<dbReference type="InterPro" id="IPR056375">
    <property type="entry name" value="Idi_bact"/>
</dbReference>
<dbReference type="InterPro" id="IPR011876">
    <property type="entry name" value="IsopentenylPP_isomerase_typ1"/>
</dbReference>
<dbReference type="InterPro" id="IPR015797">
    <property type="entry name" value="NUDIX_hydrolase-like_dom_sf"/>
</dbReference>
<dbReference type="InterPro" id="IPR000086">
    <property type="entry name" value="NUDIX_hydrolase_dom"/>
</dbReference>
<dbReference type="NCBIfam" id="TIGR02150">
    <property type="entry name" value="IPP_isom_1"/>
    <property type="match status" value="1"/>
</dbReference>
<dbReference type="NCBIfam" id="NF002995">
    <property type="entry name" value="PRK03759.1"/>
    <property type="match status" value="1"/>
</dbReference>
<dbReference type="PANTHER" id="PTHR10885">
    <property type="entry name" value="ISOPENTENYL-DIPHOSPHATE DELTA-ISOMERASE"/>
    <property type="match status" value="1"/>
</dbReference>
<dbReference type="PANTHER" id="PTHR10885:SF0">
    <property type="entry name" value="ISOPENTENYL-DIPHOSPHATE DELTA-ISOMERASE"/>
    <property type="match status" value="1"/>
</dbReference>
<dbReference type="Pfam" id="PF00293">
    <property type="entry name" value="NUDIX"/>
    <property type="match status" value="1"/>
</dbReference>
<dbReference type="PIRSF" id="PIRSF018427">
    <property type="entry name" value="Isopntndiph_ism"/>
    <property type="match status" value="1"/>
</dbReference>
<dbReference type="SUPFAM" id="SSF55811">
    <property type="entry name" value="Nudix"/>
    <property type="match status" value="1"/>
</dbReference>
<dbReference type="PROSITE" id="PS51462">
    <property type="entry name" value="NUDIX"/>
    <property type="match status" value="1"/>
</dbReference>
<organism>
    <name type="scientific">Salmonella heidelberg (strain SL476)</name>
    <dbReference type="NCBI Taxonomy" id="454169"/>
    <lineage>
        <taxon>Bacteria</taxon>
        <taxon>Pseudomonadati</taxon>
        <taxon>Pseudomonadota</taxon>
        <taxon>Gammaproteobacteria</taxon>
        <taxon>Enterobacterales</taxon>
        <taxon>Enterobacteriaceae</taxon>
        <taxon>Salmonella</taxon>
    </lineage>
</organism>
<sequence>MTEEHVVLLDEQDKPSGTLEKYAAHTLNTPLHLAFSCWLFNEDGQLLVTRRSLSKKAWPGVWTNSVCGHPQQGETTEEAIIRRCRFELGVEITDLTPVYPHFSYRATDPNGIVENEVCPVFAARATSVLQVNSEEVMDYQWSEFKSVWKSLLATPWAFSPWMVMQASDEQARERLLNYCQR</sequence>
<feature type="chain" id="PRO_1000099444" description="Isopentenyl-diphosphate Delta-isomerase">
    <location>
        <begin position="1"/>
        <end position="181"/>
    </location>
</feature>
<feature type="domain" description="Nudix hydrolase">
    <location>
        <begin position="30"/>
        <end position="164"/>
    </location>
</feature>
<feature type="active site" evidence="1">
    <location>
        <position position="67"/>
    </location>
</feature>
<feature type="active site" evidence="1">
    <location>
        <position position="116"/>
    </location>
</feature>
<feature type="binding site" evidence="1">
    <location>
        <position position="25"/>
    </location>
    <ligand>
        <name>Mn(2+)</name>
        <dbReference type="ChEBI" id="CHEBI:29035"/>
    </ligand>
</feature>
<feature type="binding site" evidence="1">
    <location>
        <position position="32"/>
    </location>
    <ligand>
        <name>Mn(2+)</name>
        <dbReference type="ChEBI" id="CHEBI:29035"/>
    </ligand>
</feature>
<feature type="binding site" evidence="1">
    <location>
        <position position="69"/>
    </location>
    <ligand>
        <name>Mn(2+)</name>
        <dbReference type="ChEBI" id="CHEBI:29035"/>
    </ligand>
</feature>
<feature type="binding site" evidence="1">
    <location>
        <position position="87"/>
    </location>
    <ligand>
        <name>Mg(2+)</name>
        <dbReference type="ChEBI" id="CHEBI:18420"/>
    </ligand>
</feature>
<feature type="binding site" evidence="1">
    <location>
        <position position="114"/>
    </location>
    <ligand>
        <name>Mn(2+)</name>
        <dbReference type="ChEBI" id="CHEBI:29035"/>
    </ligand>
</feature>
<feature type="binding site" evidence="1">
    <location>
        <position position="116"/>
    </location>
    <ligand>
        <name>Mn(2+)</name>
        <dbReference type="ChEBI" id="CHEBI:29035"/>
    </ligand>
</feature>
<proteinExistence type="inferred from homology"/>
<accession>B4TGV9</accession>
<reference key="1">
    <citation type="journal article" date="2011" name="J. Bacteriol.">
        <title>Comparative genomics of 28 Salmonella enterica isolates: evidence for CRISPR-mediated adaptive sublineage evolution.</title>
        <authorList>
            <person name="Fricke W.F."/>
            <person name="Mammel M.K."/>
            <person name="McDermott P.F."/>
            <person name="Tartera C."/>
            <person name="White D.G."/>
            <person name="Leclerc J.E."/>
            <person name="Ravel J."/>
            <person name="Cebula T.A."/>
        </authorList>
    </citation>
    <scope>NUCLEOTIDE SEQUENCE [LARGE SCALE GENOMIC DNA]</scope>
    <source>
        <strain>SL476</strain>
    </source>
</reference>
<protein>
    <recommendedName>
        <fullName evidence="1">Isopentenyl-diphosphate Delta-isomerase</fullName>
        <shortName evidence="1">IPP isomerase</shortName>
        <ecNumber evidence="1">5.3.3.2</ecNumber>
    </recommendedName>
    <alternativeName>
        <fullName evidence="1">IPP:DMAPP isomerase</fullName>
    </alternativeName>
    <alternativeName>
        <fullName evidence="1">Isopentenyl pyrophosphate isomerase</fullName>
    </alternativeName>
</protein>
<gene>
    <name evidence="1" type="primary">idi</name>
    <name type="ordered locus">SeHA_C3270</name>
</gene>